<evidence type="ECO:0000255" key="1">
    <source>
        <dbReference type="HAMAP-Rule" id="MF_00636"/>
    </source>
</evidence>
<evidence type="ECO:0000305" key="2"/>
<dbReference type="EMBL" id="CP000480">
    <property type="protein sequence ID" value="ABK72905.1"/>
    <property type="molecule type" value="Genomic_DNA"/>
</dbReference>
<dbReference type="EMBL" id="CP001663">
    <property type="protein sequence ID" value="AFP39465.1"/>
    <property type="status" value="ALT_INIT"/>
    <property type="molecule type" value="Genomic_DNA"/>
</dbReference>
<dbReference type="RefSeq" id="YP_887395.1">
    <property type="nucleotide sequence ID" value="NC_008596.1"/>
</dbReference>
<dbReference type="SMR" id="A0QWV7"/>
<dbReference type="STRING" id="246196.MSMEG_3079"/>
<dbReference type="PaxDb" id="246196-MSMEI_3001"/>
<dbReference type="KEGG" id="msb:LJ00_15320"/>
<dbReference type="KEGG" id="msg:MSMEI_3001"/>
<dbReference type="KEGG" id="msm:MSMEG_3079"/>
<dbReference type="PATRIC" id="fig|246196.19.peg.3040"/>
<dbReference type="eggNOG" id="COG1660">
    <property type="taxonomic scope" value="Bacteria"/>
</dbReference>
<dbReference type="OrthoDB" id="9784461at2"/>
<dbReference type="Proteomes" id="UP000000757">
    <property type="component" value="Chromosome"/>
</dbReference>
<dbReference type="Proteomes" id="UP000006158">
    <property type="component" value="Chromosome"/>
</dbReference>
<dbReference type="GO" id="GO:0005524">
    <property type="term" value="F:ATP binding"/>
    <property type="evidence" value="ECO:0007669"/>
    <property type="project" value="UniProtKB-UniRule"/>
</dbReference>
<dbReference type="GO" id="GO:0005525">
    <property type="term" value="F:GTP binding"/>
    <property type="evidence" value="ECO:0007669"/>
    <property type="project" value="UniProtKB-UniRule"/>
</dbReference>
<dbReference type="HAMAP" id="MF_00636">
    <property type="entry name" value="RapZ_like"/>
    <property type="match status" value="1"/>
</dbReference>
<dbReference type="InterPro" id="IPR027417">
    <property type="entry name" value="P-loop_NTPase"/>
</dbReference>
<dbReference type="InterPro" id="IPR005337">
    <property type="entry name" value="RapZ-like"/>
</dbReference>
<dbReference type="InterPro" id="IPR053930">
    <property type="entry name" value="RapZ-like_N"/>
</dbReference>
<dbReference type="InterPro" id="IPR053931">
    <property type="entry name" value="RapZ_C"/>
</dbReference>
<dbReference type="NCBIfam" id="NF003828">
    <property type="entry name" value="PRK05416.1"/>
    <property type="match status" value="1"/>
</dbReference>
<dbReference type="PANTHER" id="PTHR30448">
    <property type="entry name" value="RNASE ADAPTER PROTEIN RAPZ"/>
    <property type="match status" value="1"/>
</dbReference>
<dbReference type="PANTHER" id="PTHR30448:SF0">
    <property type="entry name" value="RNASE ADAPTER PROTEIN RAPZ"/>
    <property type="match status" value="1"/>
</dbReference>
<dbReference type="Pfam" id="PF22740">
    <property type="entry name" value="PapZ_C"/>
    <property type="match status" value="1"/>
</dbReference>
<dbReference type="Pfam" id="PF03668">
    <property type="entry name" value="RapZ-like_N"/>
    <property type="match status" value="1"/>
</dbReference>
<dbReference type="PIRSF" id="PIRSF005052">
    <property type="entry name" value="P-loopkin"/>
    <property type="match status" value="1"/>
</dbReference>
<dbReference type="SUPFAM" id="SSF52540">
    <property type="entry name" value="P-loop containing nucleoside triphosphate hydrolases"/>
    <property type="match status" value="1"/>
</dbReference>
<feature type="chain" id="PRO_0000383267" description="Nucleotide-binding protein MSMEG_3079/MSMEI_3001">
    <location>
        <begin position="1"/>
        <end position="291"/>
    </location>
</feature>
<feature type="binding site" evidence="1">
    <location>
        <begin position="14"/>
        <end position="21"/>
    </location>
    <ligand>
        <name>ATP</name>
        <dbReference type="ChEBI" id="CHEBI:30616"/>
    </ligand>
</feature>
<feature type="binding site" evidence="1">
    <location>
        <begin position="65"/>
        <end position="68"/>
    </location>
    <ligand>
        <name>GTP</name>
        <dbReference type="ChEBI" id="CHEBI:37565"/>
    </ligand>
</feature>
<organism>
    <name type="scientific">Mycolicibacterium smegmatis (strain ATCC 700084 / mc(2)155)</name>
    <name type="common">Mycobacterium smegmatis</name>
    <dbReference type="NCBI Taxonomy" id="246196"/>
    <lineage>
        <taxon>Bacteria</taxon>
        <taxon>Bacillati</taxon>
        <taxon>Actinomycetota</taxon>
        <taxon>Actinomycetes</taxon>
        <taxon>Mycobacteriales</taxon>
        <taxon>Mycobacteriaceae</taxon>
        <taxon>Mycolicibacterium</taxon>
    </lineage>
</organism>
<protein>
    <recommendedName>
        <fullName evidence="1">Nucleotide-binding protein MSMEG_3079/MSMEI_3001</fullName>
    </recommendedName>
</protein>
<name>Y3079_MYCS2</name>
<proteinExistence type="inferred from homology"/>
<gene>
    <name type="ordered locus">MSMEG_3079</name>
    <name type="ordered locus">MSMEI_3001</name>
</gene>
<reference key="1">
    <citation type="submission" date="2006-10" db="EMBL/GenBank/DDBJ databases">
        <authorList>
            <person name="Fleischmann R.D."/>
            <person name="Dodson R.J."/>
            <person name="Haft D.H."/>
            <person name="Merkel J.S."/>
            <person name="Nelson W.C."/>
            <person name="Fraser C.M."/>
        </authorList>
    </citation>
    <scope>NUCLEOTIDE SEQUENCE [LARGE SCALE GENOMIC DNA]</scope>
    <source>
        <strain>ATCC 700084 / mc(2)155</strain>
    </source>
</reference>
<reference key="2">
    <citation type="journal article" date="2007" name="Genome Biol.">
        <title>Interrupted coding sequences in Mycobacterium smegmatis: authentic mutations or sequencing errors?</title>
        <authorList>
            <person name="Deshayes C."/>
            <person name="Perrodou E."/>
            <person name="Gallien S."/>
            <person name="Euphrasie D."/>
            <person name="Schaeffer C."/>
            <person name="Van-Dorsselaer A."/>
            <person name="Poch O."/>
            <person name="Lecompte O."/>
            <person name="Reyrat J.-M."/>
        </authorList>
    </citation>
    <scope>NUCLEOTIDE SEQUENCE [LARGE SCALE GENOMIC DNA]</scope>
    <source>
        <strain>ATCC 700084 / mc(2)155</strain>
    </source>
</reference>
<reference key="3">
    <citation type="journal article" date="2009" name="Genome Res.">
        <title>Ortho-proteogenomics: multiple proteomes investigation through orthology and a new MS-based protocol.</title>
        <authorList>
            <person name="Gallien S."/>
            <person name="Perrodou E."/>
            <person name="Carapito C."/>
            <person name="Deshayes C."/>
            <person name="Reyrat J.-M."/>
            <person name="Van Dorsselaer A."/>
            <person name="Poch O."/>
            <person name="Schaeffer C."/>
            <person name="Lecompte O."/>
        </authorList>
    </citation>
    <scope>NUCLEOTIDE SEQUENCE [LARGE SCALE GENOMIC DNA]</scope>
    <source>
        <strain>ATCC 700084 / mc(2)155</strain>
    </source>
</reference>
<comment type="function">
    <text evidence="1">Displays ATPase and GTPase activities.</text>
</comment>
<comment type="similarity">
    <text evidence="1">Belongs to the RapZ-like family.</text>
</comment>
<comment type="sequence caution" evidence="2">
    <conflict type="erroneous initiation">
        <sequence resource="EMBL-CDS" id="AFP39465"/>
    </conflict>
    <text>Extended N-terminus.</text>
</comment>
<sequence>MESHEGIDVVLVTGLSGAGRGTAAKVLEDLGWYVADNLPPELIARMVDLGLAAGSRITQLAVVMDVRSKGFTGDLDWVRNELATRNIAPRVLFMEASDDILVRRYEQNRRSHPLQGTQTLAEGIAAERAMLAPVRAAADLVIDTSTLPVPALRESIERAFGGETVAYTNVTVESFGYKYGLPMDADTVMDVRFLPNPHWVDELRPHSGQHPDVRDYVLGQPGALEFLDTYHRLLDVVIDGYRREGKRYMTVAIGCTGGKHRSVAIAEALAERLEGGDGLTVRVLHRDLGRE</sequence>
<keyword id="KW-0067">ATP-binding</keyword>
<keyword id="KW-0342">GTP-binding</keyword>
<keyword id="KW-0547">Nucleotide-binding</keyword>
<keyword id="KW-1185">Reference proteome</keyword>
<accession>A0QWV7</accession>
<accession>I7FD86</accession>